<reference key="1">
    <citation type="journal article" date="2003" name="Genome Res.">
        <title>Comparative genome analysis of Vibrio vulnificus, a marine pathogen.</title>
        <authorList>
            <person name="Chen C.-Y."/>
            <person name="Wu K.-M."/>
            <person name="Chang Y.-C."/>
            <person name="Chang C.-H."/>
            <person name="Tsai H.-C."/>
            <person name="Liao T.-L."/>
            <person name="Liu Y.-M."/>
            <person name="Chen H.-J."/>
            <person name="Shen A.B.-T."/>
            <person name="Li J.-C."/>
            <person name="Su T.-L."/>
            <person name="Shao C.-P."/>
            <person name="Lee C.-T."/>
            <person name="Hor L.-I."/>
            <person name="Tsai S.-F."/>
        </authorList>
    </citation>
    <scope>NUCLEOTIDE SEQUENCE [LARGE SCALE GENOMIC DNA]</scope>
    <source>
        <strain>YJ016</strain>
    </source>
</reference>
<evidence type="ECO:0000255" key="1">
    <source>
        <dbReference type="HAMAP-Rule" id="MF_00605"/>
    </source>
</evidence>
<feature type="chain" id="PRO_0000060496" description="tRNA (guanine-N(1)-)-methyltransferase">
    <location>
        <begin position="1"/>
        <end position="249"/>
    </location>
</feature>
<feature type="binding site" evidence="1">
    <location>
        <position position="113"/>
    </location>
    <ligand>
        <name>S-adenosyl-L-methionine</name>
        <dbReference type="ChEBI" id="CHEBI:59789"/>
    </ligand>
</feature>
<feature type="binding site" evidence="1">
    <location>
        <begin position="133"/>
        <end position="138"/>
    </location>
    <ligand>
        <name>S-adenosyl-L-methionine</name>
        <dbReference type="ChEBI" id="CHEBI:59789"/>
    </ligand>
</feature>
<proteinExistence type="inferred from homology"/>
<comment type="function">
    <text evidence="1">Specifically methylates guanosine-37 in various tRNAs.</text>
</comment>
<comment type="catalytic activity">
    <reaction evidence="1">
        <text>guanosine(37) in tRNA + S-adenosyl-L-methionine = N(1)-methylguanosine(37) in tRNA + S-adenosyl-L-homocysteine + H(+)</text>
        <dbReference type="Rhea" id="RHEA:36899"/>
        <dbReference type="Rhea" id="RHEA-COMP:10145"/>
        <dbReference type="Rhea" id="RHEA-COMP:10147"/>
        <dbReference type="ChEBI" id="CHEBI:15378"/>
        <dbReference type="ChEBI" id="CHEBI:57856"/>
        <dbReference type="ChEBI" id="CHEBI:59789"/>
        <dbReference type="ChEBI" id="CHEBI:73542"/>
        <dbReference type="ChEBI" id="CHEBI:74269"/>
        <dbReference type="EC" id="2.1.1.228"/>
    </reaction>
</comment>
<comment type="subunit">
    <text evidence="1">Homodimer.</text>
</comment>
<comment type="subcellular location">
    <subcellularLocation>
        <location evidence="1">Cytoplasm</location>
    </subcellularLocation>
</comment>
<comment type="similarity">
    <text evidence="1">Belongs to the RNA methyltransferase TrmD family.</text>
</comment>
<gene>
    <name evidence="1" type="primary">trmD</name>
    <name type="ordered locus">VV2786</name>
</gene>
<organism>
    <name type="scientific">Vibrio vulnificus (strain YJ016)</name>
    <dbReference type="NCBI Taxonomy" id="196600"/>
    <lineage>
        <taxon>Bacteria</taxon>
        <taxon>Pseudomonadati</taxon>
        <taxon>Pseudomonadota</taxon>
        <taxon>Gammaproteobacteria</taxon>
        <taxon>Vibrionales</taxon>
        <taxon>Vibrionaceae</taxon>
        <taxon>Vibrio</taxon>
    </lineage>
</organism>
<accession>Q7M7J0</accession>
<dbReference type="EC" id="2.1.1.228" evidence="1"/>
<dbReference type="EMBL" id="BA000037">
    <property type="protein sequence ID" value="BAC95550.1"/>
    <property type="molecule type" value="Genomic_DNA"/>
</dbReference>
<dbReference type="RefSeq" id="WP_011079543.1">
    <property type="nucleotide sequence ID" value="NC_005139.1"/>
</dbReference>
<dbReference type="SMR" id="Q7M7J0"/>
<dbReference type="STRING" id="672.VV93_v1c24970"/>
<dbReference type="KEGG" id="vvy:VV2786"/>
<dbReference type="eggNOG" id="COG0336">
    <property type="taxonomic scope" value="Bacteria"/>
</dbReference>
<dbReference type="HOGENOM" id="CLU_047363_0_1_6"/>
<dbReference type="Proteomes" id="UP000002675">
    <property type="component" value="Chromosome I"/>
</dbReference>
<dbReference type="GO" id="GO:0005829">
    <property type="term" value="C:cytosol"/>
    <property type="evidence" value="ECO:0007669"/>
    <property type="project" value="TreeGrafter"/>
</dbReference>
<dbReference type="GO" id="GO:0052906">
    <property type="term" value="F:tRNA (guanine(37)-N1)-methyltransferase activity"/>
    <property type="evidence" value="ECO:0007669"/>
    <property type="project" value="UniProtKB-UniRule"/>
</dbReference>
<dbReference type="GO" id="GO:0002939">
    <property type="term" value="P:tRNA N1-guanine methylation"/>
    <property type="evidence" value="ECO:0007669"/>
    <property type="project" value="TreeGrafter"/>
</dbReference>
<dbReference type="CDD" id="cd18080">
    <property type="entry name" value="TrmD-like"/>
    <property type="match status" value="1"/>
</dbReference>
<dbReference type="FunFam" id="1.10.1270.20:FF:000001">
    <property type="entry name" value="tRNA (guanine-N(1)-)-methyltransferase"/>
    <property type="match status" value="1"/>
</dbReference>
<dbReference type="FunFam" id="3.40.1280.10:FF:000001">
    <property type="entry name" value="tRNA (guanine-N(1)-)-methyltransferase"/>
    <property type="match status" value="1"/>
</dbReference>
<dbReference type="Gene3D" id="3.40.1280.10">
    <property type="match status" value="1"/>
</dbReference>
<dbReference type="Gene3D" id="1.10.1270.20">
    <property type="entry name" value="tRNA(m1g37)methyltransferase, domain 2"/>
    <property type="match status" value="1"/>
</dbReference>
<dbReference type="HAMAP" id="MF_00605">
    <property type="entry name" value="TrmD"/>
    <property type="match status" value="1"/>
</dbReference>
<dbReference type="InterPro" id="IPR029028">
    <property type="entry name" value="Alpha/beta_knot_MTases"/>
</dbReference>
<dbReference type="InterPro" id="IPR023148">
    <property type="entry name" value="tRNA_m1G_MeTrfase_C_sf"/>
</dbReference>
<dbReference type="InterPro" id="IPR002649">
    <property type="entry name" value="tRNA_m1G_MeTrfase_TrmD"/>
</dbReference>
<dbReference type="InterPro" id="IPR029026">
    <property type="entry name" value="tRNA_m1G_MTases_N"/>
</dbReference>
<dbReference type="InterPro" id="IPR016009">
    <property type="entry name" value="tRNA_MeTrfase_TRMD/TRM10"/>
</dbReference>
<dbReference type="NCBIfam" id="NF000648">
    <property type="entry name" value="PRK00026.1"/>
    <property type="match status" value="1"/>
</dbReference>
<dbReference type="NCBIfam" id="TIGR00088">
    <property type="entry name" value="trmD"/>
    <property type="match status" value="1"/>
</dbReference>
<dbReference type="PANTHER" id="PTHR46417">
    <property type="entry name" value="TRNA (GUANINE-N(1)-)-METHYLTRANSFERASE"/>
    <property type="match status" value="1"/>
</dbReference>
<dbReference type="PANTHER" id="PTHR46417:SF1">
    <property type="entry name" value="TRNA (GUANINE-N(1)-)-METHYLTRANSFERASE"/>
    <property type="match status" value="1"/>
</dbReference>
<dbReference type="Pfam" id="PF01746">
    <property type="entry name" value="tRNA_m1G_MT"/>
    <property type="match status" value="1"/>
</dbReference>
<dbReference type="PIRSF" id="PIRSF000386">
    <property type="entry name" value="tRNA_mtase"/>
    <property type="match status" value="1"/>
</dbReference>
<dbReference type="SUPFAM" id="SSF75217">
    <property type="entry name" value="alpha/beta knot"/>
    <property type="match status" value="1"/>
</dbReference>
<name>TRMD_VIBVY</name>
<sequence length="249" mass="28157">MWVGVISLFPEMFRSVTDFGVTGQAVKKGLLSIETWNPRDFTHDKHRTVDDRPYGGGPGMLMMVQPLRDAIHAAKQASPGKTKVIYLSPQGRKLDQQGVEELATNENLLLICGRYEGVDERIIQSEVDEEWSIGDFVMTGGEIPAMTLIDSVSRFVPGVLGDFASAEEDSFANGLLDCPHYTRPEVLDGKEVPEVLMSGNHKEIRRWRLKQSLGRTWQRRPELLENLALTDEQEQLLAEFIQETHHKRK</sequence>
<keyword id="KW-0963">Cytoplasm</keyword>
<keyword id="KW-0489">Methyltransferase</keyword>
<keyword id="KW-0949">S-adenosyl-L-methionine</keyword>
<keyword id="KW-0808">Transferase</keyword>
<keyword id="KW-0819">tRNA processing</keyword>
<protein>
    <recommendedName>
        <fullName evidence="1">tRNA (guanine-N(1)-)-methyltransferase</fullName>
        <ecNumber evidence="1">2.1.1.228</ecNumber>
    </recommendedName>
    <alternativeName>
        <fullName evidence="1">M1G-methyltransferase</fullName>
    </alternativeName>
    <alternativeName>
        <fullName evidence="1">tRNA [GM37] methyltransferase</fullName>
    </alternativeName>
</protein>